<reference key="1">
    <citation type="journal article" date="2003" name="Lancet">
        <title>Sequencing and analysis of the genome of the Whipple's disease bacterium Tropheryma whipplei.</title>
        <authorList>
            <person name="Bentley S.D."/>
            <person name="Maiwald M."/>
            <person name="Murphy L.D."/>
            <person name="Pallen M.J."/>
            <person name="Yeats C.A."/>
            <person name="Dover L.G."/>
            <person name="Norbertczak H.T."/>
            <person name="Besra G.S."/>
            <person name="Quail M.A."/>
            <person name="Harris D.E."/>
            <person name="von Herbay A."/>
            <person name="Goble A."/>
            <person name="Rutter S."/>
            <person name="Squares R."/>
            <person name="Squares S."/>
            <person name="Barrell B.G."/>
            <person name="Parkhill J."/>
            <person name="Relman D.A."/>
        </authorList>
    </citation>
    <scope>NUCLEOTIDE SEQUENCE [LARGE SCALE GENOMIC DNA]</scope>
    <source>
        <strain>TW08/27</strain>
    </source>
</reference>
<gene>
    <name evidence="1" type="primary">fusA</name>
    <name type="ordered locus">TW694</name>
</gene>
<comment type="function">
    <text evidence="1">Catalyzes the GTP-dependent ribosomal translocation step during translation elongation. During this step, the ribosome changes from the pre-translocational (PRE) to the post-translocational (POST) state as the newly formed A-site-bound peptidyl-tRNA and P-site-bound deacylated tRNA move to the P and E sites, respectively. Catalyzes the coordinated movement of the two tRNA molecules, the mRNA and conformational changes in the ribosome.</text>
</comment>
<comment type="subcellular location">
    <subcellularLocation>
        <location evidence="1">Cytoplasm</location>
    </subcellularLocation>
</comment>
<comment type="similarity">
    <text evidence="1">Belongs to the TRAFAC class translation factor GTPase superfamily. Classic translation factor GTPase family. EF-G/EF-2 subfamily.</text>
</comment>
<accession>Q83NA0</accession>
<sequence length="701" mass="77324">MSQEVLEDLAKVRNIGIMAHIDAGKTTTTERILFYTGITHKIGEVHDGAAAMDWMAQEQERGITITSAATTCFWGGNQINIIDTPGHVDFTVEVERSLRVLDGAVAVFDGKEGVEPQSETVWRQADKYKVPRICFVNKMDKIGADFHFTVKTVVDRLGATPLVIQLPIGSESTFEGVIDLVEMRALTWRGDAKGDVKMGAEYAVEPIPEDLKQQADEFRQKLIETVAENDEALLEKFFSGEEITVAELKSAIRRLTVSGSLYPILCGSSFKNRGVQPMLDAVVDYLPSPLDVPPVNGVDADNPQERLADVSQPFSALAFKVAVHPFFGRLTYIRVYSGTLPAGSQIVNSTKSRKERFGKVFQMHSNKENPVPKMSAGHIYAVIGLKYTTTGDTLCDQDNPIILESMTFPDPVIEVAIEPKTKADQEKLSLAIQRLAEEDPTFKTEQNPETGQTVIKGMGELHLDILVDRMRREFNVEANVGTPQVAYRETIRRTVEKHEYTHKKQTGGAGQFARVIITLEPLEVTGEKTYDFVDTVTGGRIPKEYIPSVDAGIRDAMQVGVLAGYPTVGIKATLVDGAYHDVDSSEMAFRIAGSQAFKEASRRADPTLLEPIMSVEVRTPDEYMGDVIGDLNSRRGHIQSMQDSSGIKVIQARVPLSEMFGYIGDLRSKTSGRAVYSMTFDGYAEAPKSVTEEVVRKARGE</sequence>
<dbReference type="EMBL" id="BX251412">
    <property type="protein sequence ID" value="CAD67353.1"/>
    <property type="molecule type" value="Genomic_DNA"/>
</dbReference>
<dbReference type="RefSeq" id="WP_011096631.1">
    <property type="nucleotide sequence ID" value="NC_004551.1"/>
</dbReference>
<dbReference type="SMR" id="Q83NA0"/>
<dbReference type="GeneID" id="67388470"/>
<dbReference type="KEGG" id="tws:TW694"/>
<dbReference type="HOGENOM" id="CLU_002794_4_1_11"/>
<dbReference type="GO" id="GO:0005737">
    <property type="term" value="C:cytoplasm"/>
    <property type="evidence" value="ECO:0007669"/>
    <property type="project" value="UniProtKB-SubCell"/>
</dbReference>
<dbReference type="GO" id="GO:0005525">
    <property type="term" value="F:GTP binding"/>
    <property type="evidence" value="ECO:0007669"/>
    <property type="project" value="UniProtKB-UniRule"/>
</dbReference>
<dbReference type="GO" id="GO:0003924">
    <property type="term" value="F:GTPase activity"/>
    <property type="evidence" value="ECO:0007669"/>
    <property type="project" value="InterPro"/>
</dbReference>
<dbReference type="GO" id="GO:0003746">
    <property type="term" value="F:translation elongation factor activity"/>
    <property type="evidence" value="ECO:0007669"/>
    <property type="project" value="UniProtKB-UniRule"/>
</dbReference>
<dbReference type="GO" id="GO:0032790">
    <property type="term" value="P:ribosome disassembly"/>
    <property type="evidence" value="ECO:0007669"/>
    <property type="project" value="TreeGrafter"/>
</dbReference>
<dbReference type="CDD" id="cd01886">
    <property type="entry name" value="EF-G"/>
    <property type="match status" value="1"/>
</dbReference>
<dbReference type="CDD" id="cd16262">
    <property type="entry name" value="EFG_III"/>
    <property type="match status" value="1"/>
</dbReference>
<dbReference type="CDD" id="cd01434">
    <property type="entry name" value="EFG_mtEFG1_IV"/>
    <property type="match status" value="1"/>
</dbReference>
<dbReference type="CDD" id="cd03713">
    <property type="entry name" value="EFG_mtEFG_C"/>
    <property type="match status" value="1"/>
</dbReference>
<dbReference type="CDD" id="cd04088">
    <property type="entry name" value="EFG_mtEFG_II"/>
    <property type="match status" value="1"/>
</dbReference>
<dbReference type="FunFam" id="2.40.30.10:FF:000006">
    <property type="entry name" value="Elongation factor G"/>
    <property type="match status" value="1"/>
</dbReference>
<dbReference type="FunFam" id="3.30.230.10:FF:000003">
    <property type="entry name" value="Elongation factor G"/>
    <property type="match status" value="1"/>
</dbReference>
<dbReference type="FunFam" id="3.30.70.240:FF:000001">
    <property type="entry name" value="Elongation factor G"/>
    <property type="match status" value="1"/>
</dbReference>
<dbReference type="FunFam" id="3.30.70.870:FF:000001">
    <property type="entry name" value="Elongation factor G"/>
    <property type="match status" value="1"/>
</dbReference>
<dbReference type="FunFam" id="3.40.50.300:FF:000029">
    <property type="entry name" value="Elongation factor G"/>
    <property type="match status" value="1"/>
</dbReference>
<dbReference type="Gene3D" id="3.30.230.10">
    <property type="match status" value="1"/>
</dbReference>
<dbReference type="Gene3D" id="3.30.70.240">
    <property type="match status" value="1"/>
</dbReference>
<dbReference type="Gene3D" id="3.30.70.870">
    <property type="entry name" value="Elongation Factor G (Translational Gtpase), domain 3"/>
    <property type="match status" value="1"/>
</dbReference>
<dbReference type="Gene3D" id="3.40.50.300">
    <property type="entry name" value="P-loop containing nucleotide triphosphate hydrolases"/>
    <property type="match status" value="1"/>
</dbReference>
<dbReference type="Gene3D" id="2.40.30.10">
    <property type="entry name" value="Translation factors"/>
    <property type="match status" value="1"/>
</dbReference>
<dbReference type="HAMAP" id="MF_00054_B">
    <property type="entry name" value="EF_G_EF_2_B"/>
    <property type="match status" value="1"/>
</dbReference>
<dbReference type="InterPro" id="IPR053905">
    <property type="entry name" value="EF-G-like_DII"/>
</dbReference>
<dbReference type="InterPro" id="IPR041095">
    <property type="entry name" value="EFG_II"/>
</dbReference>
<dbReference type="InterPro" id="IPR009022">
    <property type="entry name" value="EFG_III"/>
</dbReference>
<dbReference type="InterPro" id="IPR035647">
    <property type="entry name" value="EFG_III/V"/>
</dbReference>
<dbReference type="InterPro" id="IPR047872">
    <property type="entry name" value="EFG_IV"/>
</dbReference>
<dbReference type="InterPro" id="IPR035649">
    <property type="entry name" value="EFG_V"/>
</dbReference>
<dbReference type="InterPro" id="IPR000640">
    <property type="entry name" value="EFG_V-like"/>
</dbReference>
<dbReference type="InterPro" id="IPR031157">
    <property type="entry name" value="G_TR_CS"/>
</dbReference>
<dbReference type="InterPro" id="IPR027417">
    <property type="entry name" value="P-loop_NTPase"/>
</dbReference>
<dbReference type="InterPro" id="IPR020568">
    <property type="entry name" value="Ribosomal_Su5_D2-typ_SF"/>
</dbReference>
<dbReference type="InterPro" id="IPR014721">
    <property type="entry name" value="Ribsml_uS5_D2-typ_fold_subgr"/>
</dbReference>
<dbReference type="InterPro" id="IPR005225">
    <property type="entry name" value="Small_GTP-bd"/>
</dbReference>
<dbReference type="InterPro" id="IPR000795">
    <property type="entry name" value="T_Tr_GTP-bd_dom"/>
</dbReference>
<dbReference type="InterPro" id="IPR009000">
    <property type="entry name" value="Transl_B-barrel_sf"/>
</dbReference>
<dbReference type="InterPro" id="IPR004540">
    <property type="entry name" value="Transl_elong_EFG/EF2"/>
</dbReference>
<dbReference type="InterPro" id="IPR005517">
    <property type="entry name" value="Transl_elong_EFG/EF2_IV"/>
</dbReference>
<dbReference type="NCBIfam" id="TIGR00484">
    <property type="entry name" value="EF-G"/>
    <property type="match status" value="1"/>
</dbReference>
<dbReference type="NCBIfam" id="NF009381">
    <property type="entry name" value="PRK12740.1-5"/>
    <property type="match status" value="1"/>
</dbReference>
<dbReference type="NCBIfam" id="TIGR00231">
    <property type="entry name" value="small_GTP"/>
    <property type="match status" value="1"/>
</dbReference>
<dbReference type="PANTHER" id="PTHR43261:SF1">
    <property type="entry name" value="RIBOSOME-RELEASING FACTOR 2, MITOCHONDRIAL"/>
    <property type="match status" value="1"/>
</dbReference>
<dbReference type="PANTHER" id="PTHR43261">
    <property type="entry name" value="TRANSLATION ELONGATION FACTOR G-RELATED"/>
    <property type="match status" value="1"/>
</dbReference>
<dbReference type="Pfam" id="PF22042">
    <property type="entry name" value="EF-G_D2"/>
    <property type="match status" value="1"/>
</dbReference>
<dbReference type="Pfam" id="PF00679">
    <property type="entry name" value="EFG_C"/>
    <property type="match status" value="1"/>
</dbReference>
<dbReference type="Pfam" id="PF14492">
    <property type="entry name" value="EFG_III"/>
    <property type="match status" value="1"/>
</dbReference>
<dbReference type="Pfam" id="PF03764">
    <property type="entry name" value="EFG_IV"/>
    <property type="match status" value="1"/>
</dbReference>
<dbReference type="Pfam" id="PF00009">
    <property type="entry name" value="GTP_EFTU"/>
    <property type="match status" value="1"/>
</dbReference>
<dbReference type="PRINTS" id="PR00315">
    <property type="entry name" value="ELONGATNFCT"/>
</dbReference>
<dbReference type="SMART" id="SM00838">
    <property type="entry name" value="EFG_C"/>
    <property type="match status" value="1"/>
</dbReference>
<dbReference type="SMART" id="SM00889">
    <property type="entry name" value="EFG_IV"/>
    <property type="match status" value="1"/>
</dbReference>
<dbReference type="SUPFAM" id="SSF54980">
    <property type="entry name" value="EF-G C-terminal domain-like"/>
    <property type="match status" value="2"/>
</dbReference>
<dbReference type="SUPFAM" id="SSF52540">
    <property type="entry name" value="P-loop containing nucleoside triphosphate hydrolases"/>
    <property type="match status" value="1"/>
</dbReference>
<dbReference type="SUPFAM" id="SSF54211">
    <property type="entry name" value="Ribosomal protein S5 domain 2-like"/>
    <property type="match status" value="1"/>
</dbReference>
<dbReference type="SUPFAM" id="SSF50447">
    <property type="entry name" value="Translation proteins"/>
    <property type="match status" value="1"/>
</dbReference>
<dbReference type="PROSITE" id="PS00301">
    <property type="entry name" value="G_TR_1"/>
    <property type="match status" value="1"/>
</dbReference>
<dbReference type="PROSITE" id="PS51722">
    <property type="entry name" value="G_TR_2"/>
    <property type="match status" value="1"/>
</dbReference>
<protein>
    <recommendedName>
        <fullName evidence="1">Elongation factor G</fullName>
        <shortName evidence="1">EF-G</shortName>
    </recommendedName>
</protein>
<name>EFG_TROW8</name>
<feature type="chain" id="PRO_0000091256" description="Elongation factor G">
    <location>
        <begin position="1"/>
        <end position="701"/>
    </location>
</feature>
<feature type="domain" description="tr-type G">
    <location>
        <begin position="10"/>
        <end position="290"/>
    </location>
</feature>
<feature type="binding site" evidence="1">
    <location>
        <begin position="19"/>
        <end position="26"/>
    </location>
    <ligand>
        <name>GTP</name>
        <dbReference type="ChEBI" id="CHEBI:37565"/>
    </ligand>
</feature>
<feature type="binding site" evidence="1">
    <location>
        <begin position="83"/>
        <end position="87"/>
    </location>
    <ligand>
        <name>GTP</name>
        <dbReference type="ChEBI" id="CHEBI:37565"/>
    </ligand>
</feature>
<feature type="binding site" evidence="1">
    <location>
        <begin position="137"/>
        <end position="140"/>
    </location>
    <ligand>
        <name>GTP</name>
        <dbReference type="ChEBI" id="CHEBI:37565"/>
    </ligand>
</feature>
<proteinExistence type="inferred from homology"/>
<evidence type="ECO:0000255" key="1">
    <source>
        <dbReference type="HAMAP-Rule" id="MF_00054"/>
    </source>
</evidence>
<keyword id="KW-0963">Cytoplasm</keyword>
<keyword id="KW-0251">Elongation factor</keyword>
<keyword id="KW-0342">GTP-binding</keyword>
<keyword id="KW-0547">Nucleotide-binding</keyword>
<keyword id="KW-0648">Protein biosynthesis</keyword>
<organism>
    <name type="scientific">Tropheryma whipplei (strain TW08/27)</name>
    <name type="common">Whipple's bacillus</name>
    <dbReference type="NCBI Taxonomy" id="218496"/>
    <lineage>
        <taxon>Bacteria</taxon>
        <taxon>Bacillati</taxon>
        <taxon>Actinomycetota</taxon>
        <taxon>Actinomycetes</taxon>
        <taxon>Micrococcales</taxon>
        <taxon>Tropherymataceae</taxon>
        <taxon>Tropheryma</taxon>
    </lineage>
</organism>